<sequence length="229" mass="25061">MTAPALLCEVHGERDDGTGRPSLYLTFDDGPHPFCTPEILDILAEHRVPATFFVIGEFLADQSKLIQRMIAEGHHEVANHTMTHPDLSDCEPRRVQRQILETNRAIKMASPGGGAAHPRAPYGIWTEEVLKASANAATHAVHWSVDPRDWSSPGADAIVNDVLQSVRPGAIVLLHDGCPPDEMQQGADHSLRHQTIMALSSIIPALHDRPLCIYTLRLLGSSEDPMDIA</sequence>
<feature type="chain" id="PRO_0000172752" description="Chitooligosaccharide deacetylase">
    <location>
        <begin position="1"/>
        <end position="229"/>
    </location>
</feature>
<feature type="domain" description="NodB homology" evidence="2">
    <location>
        <begin position="21"/>
        <end position="214"/>
    </location>
</feature>
<feature type="active site" description="Proton acceptor" evidence="1">
    <location>
        <position position="28"/>
    </location>
</feature>
<feature type="active site" description="Proton donor" evidence="1">
    <location>
        <position position="175"/>
    </location>
</feature>
<feature type="binding site" evidence="1">
    <location>
        <position position="80"/>
    </location>
    <ligand>
        <name>a divalent metal cation</name>
        <dbReference type="ChEBI" id="CHEBI:60240"/>
    </ligand>
</feature>
<feature type="binding site" evidence="1">
    <location>
        <position position="84"/>
    </location>
    <ligand>
        <name>a divalent metal cation</name>
        <dbReference type="ChEBI" id="CHEBI:60240"/>
    </ligand>
</feature>
<feature type="site" description="Raises pKa of active site His" evidence="1">
    <location>
        <position position="149"/>
    </location>
</feature>
<reference key="1">
    <citation type="journal article" date="1991" name="J. Bacteriol.">
        <title>Novel organization of the common nodulation genes in Rhizobium leguminosarum bv. phaseoli strains.</title>
        <authorList>
            <person name="Vazquez M.V."/>
            <person name="Davalos A."/>
            <person name="Las Penas A."/>
            <person name="Sanchez F."/>
            <person name="Quinto C."/>
        </authorList>
    </citation>
    <scope>NUCLEOTIDE SEQUENCE [GENOMIC DNA]</scope>
    <source>
        <strain>CE-3</strain>
    </source>
</reference>
<geneLocation type="plasmid">
    <name>sym p42d</name>
</geneLocation>
<comment type="function">
    <text>Is involved in generating a small heat-stable compound (Nod), an acylated oligomer of N-acetylglucosamine, that stimulates mitosis in various plant protoplasts.</text>
</comment>
<comment type="subcellular location">
    <subcellularLocation>
        <location>Cytoplasm</location>
    </subcellularLocation>
</comment>
<comment type="similarity">
    <text evidence="3">Belongs to the polysaccharide deacetylase family.</text>
</comment>
<comment type="caution">
    <text evidence="3">Plasmid p42d was originally thought to originate from Rhizobium leguminosarum (biovar phaseoli).</text>
</comment>
<dbReference type="EC" id="3.5.1.-"/>
<dbReference type="EMBL" id="M58626">
    <property type="protein sequence ID" value="AAA98210.1"/>
    <property type="molecule type" value="Genomic_DNA"/>
</dbReference>
<dbReference type="PIR" id="D38180">
    <property type="entry name" value="D38180"/>
</dbReference>
<dbReference type="SMR" id="P24150"/>
<dbReference type="GO" id="GO:0005737">
    <property type="term" value="C:cytoplasm"/>
    <property type="evidence" value="ECO:0007669"/>
    <property type="project" value="UniProtKB-SubCell"/>
</dbReference>
<dbReference type="GO" id="GO:0016020">
    <property type="term" value="C:membrane"/>
    <property type="evidence" value="ECO:0007669"/>
    <property type="project" value="TreeGrafter"/>
</dbReference>
<dbReference type="GO" id="GO:0016810">
    <property type="term" value="F:hydrolase activity, acting on carbon-nitrogen (but not peptide) bonds"/>
    <property type="evidence" value="ECO:0007669"/>
    <property type="project" value="InterPro"/>
</dbReference>
<dbReference type="GO" id="GO:0046872">
    <property type="term" value="F:metal ion binding"/>
    <property type="evidence" value="ECO:0007669"/>
    <property type="project" value="UniProtKB-KW"/>
</dbReference>
<dbReference type="GO" id="GO:0005975">
    <property type="term" value="P:carbohydrate metabolic process"/>
    <property type="evidence" value="ECO:0007669"/>
    <property type="project" value="InterPro"/>
</dbReference>
<dbReference type="Gene3D" id="3.20.20.370">
    <property type="entry name" value="Glycoside hydrolase/deacetylase"/>
    <property type="match status" value="1"/>
</dbReference>
<dbReference type="InterPro" id="IPR011330">
    <property type="entry name" value="Glyco_hydro/deAcase_b/a-brl"/>
</dbReference>
<dbReference type="InterPro" id="IPR002509">
    <property type="entry name" value="NODB_dom"/>
</dbReference>
<dbReference type="InterPro" id="IPR026402">
    <property type="entry name" value="Nodulat_NodB"/>
</dbReference>
<dbReference type="InterPro" id="IPR050248">
    <property type="entry name" value="Polysacc_deacetylase_ArnD"/>
</dbReference>
<dbReference type="NCBIfam" id="TIGR04243">
    <property type="entry name" value="nodulat_NodB"/>
    <property type="match status" value="1"/>
</dbReference>
<dbReference type="PANTHER" id="PTHR10587:SF133">
    <property type="entry name" value="CHITIN DEACETYLASE 1-RELATED"/>
    <property type="match status" value="1"/>
</dbReference>
<dbReference type="PANTHER" id="PTHR10587">
    <property type="entry name" value="GLYCOSYL TRANSFERASE-RELATED"/>
    <property type="match status" value="1"/>
</dbReference>
<dbReference type="Pfam" id="PF01522">
    <property type="entry name" value="Polysacc_deac_1"/>
    <property type="match status" value="1"/>
</dbReference>
<dbReference type="SUPFAM" id="SSF88713">
    <property type="entry name" value="Glycoside hydrolase/deacetylase"/>
    <property type="match status" value="1"/>
</dbReference>
<dbReference type="PROSITE" id="PS51677">
    <property type="entry name" value="NODB"/>
    <property type="match status" value="1"/>
</dbReference>
<keyword id="KW-0963">Cytoplasm</keyword>
<keyword id="KW-0378">Hydrolase</keyword>
<keyword id="KW-0479">Metal-binding</keyword>
<keyword id="KW-0536">Nodulation</keyword>
<keyword id="KW-0614">Plasmid</keyword>
<protein>
    <recommendedName>
        <fullName>Chitooligosaccharide deacetylase</fullName>
        <ecNumber>3.5.1.-</ecNumber>
    </recommendedName>
    <alternativeName>
        <fullName>Nodulation protein B</fullName>
    </alternativeName>
</protein>
<accession>P24150</accession>
<name>NODB_RHILP</name>
<proteinExistence type="inferred from homology"/>
<gene>
    <name type="primary">nodB</name>
</gene>
<evidence type="ECO:0000250" key="1"/>
<evidence type="ECO:0000255" key="2">
    <source>
        <dbReference type="PROSITE-ProRule" id="PRU01014"/>
    </source>
</evidence>
<evidence type="ECO:0000305" key="3"/>
<organism>
    <name type="scientific">Rhizobium leguminosarum bv. phaseoli</name>
    <dbReference type="NCBI Taxonomy" id="385"/>
    <lineage>
        <taxon>Bacteria</taxon>
        <taxon>Pseudomonadati</taxon>
        <taxon>Pseudomonadota</taxon>
        <taxon>Alphaproteobacteria</taxon>
        <taxon>Hyphomicrobiales</taxon>
        <taxon>Rhizobiaceae</taxon>
        <taxon>Rhizobium/Agrobacterium group</taxon>
        <taxon>Rhizobium</taxon>
    </lineage>
</organism>